<keyword id="KW-0030">Aminoacyl-tRNA synthetase</keyword>
<keyword id="KW-0067">ATP-binding</keyword>
<keyword id="KW-0963">Cytoplasm</keyword>
<keyword id="KW-0436">Ligase</keyword>
<keyword id="KW-0547">Nucleotide-binding</keyword>
<keyword id="KW-0648">Protein biosynthesis</keyword>
<keyword id="KW-1185">Reference proteome</keyword>
<keyword id="KW-0694">RNA-binding</keyword>
<reference key="1">
    <citation type="journal article" date="2004" name="Science">
        <title>A predator unmasked: life cycle of Bdellovibrio bacteriovorus from a genomic perspective.</title>
        <authorList>
            <person name="Rendulic S."/>
            <person name="Jagtap P."/>
            <person name="Rosinus A."/>
            <person name="Eppinger M."/>
            <person name="Baar C."/>
            <person name="Lanz C."/>
            <person name="Keller H."/>
            <person name="Lambert C."/>
            <person name="Evans K.J."/>
            <person name="Goesmann A."/>
            <person name="Meyer F."/>
            <person name="Sockett R.E."/>
            <person name="Schuster S.C."/>
        </authorList>
    </citation>
    <scope>NUCLEOTIDE SEQUENCE [LARGE SCALE GENOMIC DNA]</scope>
    <source>
        <strain>ATCC 15356 / DSM 50701 / NCIMB 9529 / HD100</strain>
    </source>
</reference>
<name>SYY_BDEBA</name>
<gene>
    <name evidence="1" type="primary">tyrS</name>
    <name type="ordered locus">Bd1189</name>
</gene>
<accession>Q6MNQ2</accession>
<dbReference type="EC" id="6.1.1.1" evidence="1"/>
<dbReference type="EMBL" id="BX842649">
    <property type="protein sequence ID" value="CAE79099.1"/>
    <property type="molecule type" value="Genomic_DNA"/>
</dbReference>
<dbReference type="RefSeq" id="WP_011163701.1">
    <property type="nucleotide sequence ID" value="NC_005363.1"/>
</dbReference>
<dbReference type="SMR" id="Q6MNQ2"/>
<dbReference type="STRING" id="264462.Bd1189"/>
<dbReference type="GeneID" id="93012227"/>
<dbReference type="KEGG" id="bba:Bd1189"/>
<dbReference type="eggNOG" id="COG0162">
    <property type="taxonomic scope" value="Bacteria"/>
</dbReference>
<dbReference type="HOGENOM" id="CLU_024003_5_0_7"/>
<dbReference type="Proteomes" id="UP000008080">
    <property type="component" value="Chromosome"/>
</dbReference>
<dbReference type="GO" id="GO:0005829">
    <property type="term" value="C:cytosol"/>
    <property type="evidence" value="ECO:0007669"/>
    <property type="project" value="TreeGrafter"/>
</dbReference>
<dbReference type="GO" id="GO:0005524">
    <property type="term" value="F:ATP binding"/>
    <property type="evidence" value="ECO:0007669"/>
    <property type="project" value="UniProtKB-UniRule"/>
</dbReference>
<dbReference type="GO" id="GO:0003723">
    <property type="term" value="F:RNA binding"/>
    <property type="evidence" value="ECO:0007669"/>
    <property type="project" value="UniProtKB-KW"/>
</dbReference>
<dbReference type="GO" id="GO:0004831">
    <property type="term" value="F:tyrosine-tRNA ligase activity"/>
    <property type="evidence" value="ECO:0007669"/>
    <property type="project" value="UniProtKB-UniRule"/>
</dbReference>
<dbReference type="GO" id="GO:0006437">
    <property type="term" value="P:tyrosyl-tRNA aminoacylation"/>
    <property type="evidence" value="ECO:0007669"/>
    <property type="project" value="UniProtKB-UniRule"/>
</dbReference>
<dbReference type="CDD" id="cd00165">
    <property type="entry name" value="S4"/>
    <property type="match status" value="1"/>
</dbReference>
<dbReference type="CDD" id="cd00805">
    <property type="entry name" value="TyrRS_core"/>
    <property type="match status" value="1"/>
</dbReference>
<dbReference type="FunFam" id="3.10.290.10:FF:000022">
    <property type="entry name" value="Tyrosine--tRNA ligase"/>
    <property type="match status" value="1"/>
</dbReference>
<dbReference type="FunFam" id="3.40.50.620:FF:000061">
    <property type="entry name" value="Tyrosine--tRNA ligase"/>
    <property type="match status" value="1"/>
</dbReference>
<dbReference type="Gene3D" id="3.40.50.620">
    <property type="entry name" value="HUPs"/>
    <property type="match status" value="1"/>
</dbReference>
<dbReference type="Gene3D" id="3.10.290.10">
    <property type="entry name" value="RNA-binding S4 domain"/>
    <property type="match status" value="1"/>
</dbReference>
<dbReference type="Gene3D" id="1.10.240.10">
    <property type="entry name" value="Tyrosyl-Transfer RNA Synthetase"/>
    <property type="match status" value="1"/>
</dbReference>
<dbReference type="HAMAP" id="MF_02007">
    <property type="entry name" value="Tyr_tRNA_synth_type2"/>
    <property type="match status" value="1"/>
</dbReference>
<dbReference type="InterPro" id="IPR002305">
    <property type="entry name" value="aa-tRNA-synth_Ic"/>
</dbReference>
<dbReference type="InterPro" id="IPR014729">
    <property type="entry name" value="Rossmann-like_a/b/a_fold"/>
</dbReference>
<dbReference type="InterPro" id="IPR002942">
    <property type="entry name" value="S4_RNA-bd"/>
</dbReference>
<dbReference type="InterPro" id="IPR036986">
    <property type="entry name" value="S4_RNA-bd_sf"/>
</dbReference>
<dbReference type="InterPro" id="IPR054608">
    <property type="entry name" value="SYY-like_C"/>
</dbReference>
<dbReference type="InterPro" id="IPR002307">
    <property type="entry name" value="Tyr-tRNA-ligase"/>
</dbReference>
<dbReference type="InterPro" id="IPR024088">
    <property type="entry name" value="Tyr-tRNA-ligase_bac-type"/>
</dbReference>
<dbReference type="InterPro" id="IPR024108">
    <property type="entry name" value="Tyr-tRNA-ligase_bac_2"/>
</dbReference>
<dbReference type="NCBIfam" id="TIGR00234">
    <property type="entry name" value="tyrS"/>
    <property type="match status" value="1"/>
</dbReference>
<dbReference type="PANTHER" id="PTHR11766:SF1">
    <property type="entry name" value="TYROSINE--TRNA LIGASE"/>
    <property type="match status" value="1"/>
</dbReference>
<dbReference type="PANTHER" id="PTHR11766">
    <property type="entry name" value="TYROSYL-TRNA SYNTHETASE"/>
    <property type="match status" value="1"/>
</dbReference>
<dbReference type="Pfam" id="PF22421">
    <property type="entry name" value="SYY_C-terminal"/>
    <property type="match status" value="1"/>
</dbReference>
<dbReference type="Pfam" id="PF00579">
    <property type="entry name" value="tRNA-synt_1b"/>
    <property type="match status" value="1"/>
</dbReference>
<dbReference type="PRINTS" id="PR01040">
    <property type="entry name" value="TRNASYNTHTYR"/>
</dbReference>
<dbReference type="SMART" id="SM00363">
    <property type="entry name" value="S4"/>
    <property type="match status" value="1"/>
</dbReference>
<dbReference type="SUPFAM" id="SSF55174">
    <property type="entry name" value="Alpha-L RNA-binding motif"/>
    <property type="match status" value="1"/>
</dbReference>
<dbReference type="SUPFAM" id="SSF52374">
    <property type="entry name" value="Nucleotidylyl transferase"/>
    <property type="match status" value="1"/>
</dbReference>
<dbReference type="PROSITE" id="PS50889">
    <property type="entry name" value="S4"/>
    <property type="match status" value="1"/>
</dbReference>
<feature type="chain" id="PRO_0000236695" description="Tyrosine--tRNA ligase">
    <location>
        <begin position="1"/>
        <end position="405"/>
    </location>
</feature>
<feature type="domain" description="S4 RNA-binding" evidence="1">
    <location>
        <begin position="341"/>
        <end position="404"/>
    </location>
</feature>
<feature type="short sequence motif" description="'HIGH' region">
    <location>
        <begin position="46"/>
        <end position="55"/>
    </location>
</feature>
<feature type="short sequence motif" description="'KMSKS' region">
    <location>
        <begin position="230"/>
        <end position="234"/>
    </location>
</feature>
<feature type="binding site" evidence="1">
    <location>
        <position position="233"/>
    </location>
    <ligand>
        <name>ATP</name>
        <dbReference type="ChEBI" id="CHEBI:30616"/>
    </ligand>
</feature>
<organism>
    <name type="scientific">Bdellovibrio bacteriovorus (strain ATCC 15356 / DSM 50701 / NCIMB 9529 / HD100)</name>
    <dbReference type="NCBI Taxonomy" id="264462"/>
    <lineage>
        <taxon>Bacteria</taxon>
        <taxon>Pseudomonadati</taxon>
        <taxon>Bdellovibrionota</taxon>
        <taxon>Bdellovibrionia</taxon>
        <taxon>Bdellovibrionales</taxon>
        <taxon>Pseudobdellovibrionaceae</taxon>
        <taxon>Bdellovibrio</taxon>
    </lineage>
</organism>
<protein>
    <recommendedName>
        <fullName evidence="1">Tyrosine--tRNA ligase</fullName>
        <ecNumber evidence="1">6.1.1.1</ecNumber>
    </recommendedName>
    <alternativeName>
        <fullName evidence="1">Tyrosyl-tRNA synthetase</fullName>
        <shortName evidence="1">TyrRS</shortName>
    </alternativeName>
</protein>
<proteinExistence type="inferred from homology"/>
<comment type="function">
    <text evidence="1">Catalyzes the attachment of tyrosine to tRNA(Tyr) in a two-step reaction: tyrosine is first activated by ATP to form Tyr-AMP and then transferred to the acceptor end of tRNA(Tyr).</text>
</comment>
<comment type="catalytic activity">
    <reaction evidence="1">
        <text>tRNA(Tyr) + L-tyrosine + ATP = L-tyrosyl-tRNA(Tyr) + AMP + diphosphate + H(+)</text>
        <dbReference type="Rhea" id="RHEA:10220"/>
        <dbReference type="Rhea" id="RHEA-COMP:9706"/>
        <dbReference type="Rhea" id="RHEA-COMP:9707"/>
        <dbReference type="ChEBI" id="CHEBI:15378"/>
        <dbReference type="ChEBI" id="CHEBI:30616"/>
        <dbReference type="ChEBI" id="CHEBI:33019"/>
        <dbReference type="ChEBI" id="CHEBI:58315"/>
        <dbReference type="ChEBI" id="CHEBI:78442"/>
        <dbReference type="ChEBI" id="CHEBI:78536"/>
        <dbReference type="ChEBI" id="CHEBI:456215"/>
        <dbReference type="EC" id="6.1.1.1"/>
    </reaction>
</comment>
<comment type="subunit">
    <text evidence="1">Homodimer.</text>
</comment>
<comment type="subcellular location">
    <subcellularLocation>
        <location evidence="1">Cytoplasm</location>
    </subcellularLocation>
</comment>
<comment type="similarity">
    <text evidence="1">Belongs to the class-I aminoacyl-tRNA synthetase family. TyrS type 2 subfamily.</text>
</comment>
<sequence length="405" mass="45368">MMSPQEQLERIKFGTADFINDEDMLKKLKRSIETKKPLNIKLGADPTRPDIHLGHTVVINKLKTFQDLGHKVSFLIGDFTAMIGDPSGKNSTRPMLTREEIEENGRSYAKQIFKILDPEKTEIVYNSSWIMKMTPAEFITMTSKYTVAQLLEREDFTKRYRSGTPIGIHEFIYPLTQGYDSVALKTDVELGGTDQKFNLLVGRAMQAAYGMEAQCVLTMPILEGIDGVNKMSKSLDNYISVVDTPKDMFGKTMRISDELMYRWYELLTDVGAAGLNQLRADVAEGRKHPRTVKVELAKFLIKRFHSQAEAQAAEDEFNRIFVEKGLPDEVPDFEVEAETQMGLAALMVKAQLAASNSEAGRLIQGGGVQIDGEKVSDPRLKIDLKSGASFVLKAGKKKFVKIVVK</sequence>
<evidence type="ECO:0000255" key="1">
    <source>
        <dbReference type="HAMAP-Rule" id="MF_02007"/>
    </source>
</evidence>